<evidence type="ECO:0000255" key="1">
    <source>
        <dbReference type="PROSITE-ProRule" id="PRU00175"/>
    </source>
</evidence>
<evidence type="ECO:0000256" key="2">
    <source>
        <dbReference type="SAM" id="MobiDB-lite"/>
    </source>
</evidence>
<organism>
    <name type="scientific">Schizosaccharomyces pombe (strain 972 / ATCC 24843)</name>
    <name type="common">Fission yeast</name>
    <dbReference type="NCBI Taxonomy" id="284812"/>
    <lineage>
        <taxon>Eukaryota</taxon>
        <taxon>Fungi</taxon>
        <taxon>Dikarya</taxon>
        <taxon>Ascomycota</taxon>
        <taxon>Taphrinomycotina</taxon>
        <taxon>Schizosaccharomycetes</taxon>
        <taxon>Schizosaccharomycetales</taxon>
        <taxon>Schizosaccharomycetaceae</taxon>
        <taxon>Schizosaccharomyces</taxon>
    </lineage>
</organism>
<feature type="chain" id="PRO_0000310487" description="Uncharacterized RING finger protein P32A8.03c">
    <location>
        <begin position="1"/>
        <end position="513"/>
    </location>
</feature>
<feature type="zinc finger region" description="RING-type; atypical" evidence="1">
    <location>
        <begin position="396"/>
        <end position="437"/>
    </location>
</feature>
<feature type="region of interest" description="Disordered" evidence="2">
    <location>
        <begin position="72"/>
        <end position="113"/>
    </location>
</feature>
<feature type="region of interest" description="Disordered" evidence="2">
    <location>
        <begin position="155"/>
        <end position="262"/>
    </location>
</feature>
<feature type="region of interest" description="Disordered" evidence="2">
    <location>
        <begin position="439"/>
        <end position="513"/>
    </location>
</feature>
<feature type="compositionally biased region" description="Low complexity" evidence="2">
    <location>
        <begin position="82"/>
        <end position="106"/>
    </location>
</feature>
<feature type="compositionally biased region" description="Polar residues" evidence="2">
    <location>
        <begin position="164"/>
        <end position="189"/>
    </location>
</feature>
<feature type="compositionally biased region" description="Polar residues" evidence="2">
    <location>
        <begin position="210"/>
        <end position="228"/>
    </location>
</feature>
<feature type="compositionally biased region" description="Low complexity" evidence="2">
    <location>
        <begin position="229"/>
        <end position="238"/>
    </location>
</feature>
<feature type="compositionally biased region" description="Pro residues" evidence="2">
    <location>
        <begin position="239"/>
        <end position="248"/>
    </location>
</feature>
<feature type="compositionally biased region" description="Polar residues" evidence="2">
    <location>
        <begin position="253"/>
        <end position="262"/>
    </location>
</feature>
<feature type="compositionally biased region" description="Polar residues" evidence="2">
    <location>
        <begin position="442"/>
        <end position="493"/>
    </location>
</feature>
<proteinExistence type="predicted"/>
<reference key="1">
    <citation type="journal article" date="2002" name="Nature">
        <title>The genome sequence of Schizosaccharomyces pombe.</title>
        <authorList>
            <person name="Wood V."/>
            <person name="Gwilliam R."/>
            <person name="Rajandream M.A."/>
            <person name="Lyne M.H."/>
            <person name="Lyne R."/>
            <person name="Stewart A."/>
            <person name="Sgouros J.G."/>
            <person name="Peat N."/>
            <person name="Hayles J."/>
            <person name="Baker S.G."/>
            <person name="Basham D."/>
            <person name="Bowman S."/>
            <person name="Brooks K."/>
            <person name="Brown D."/>
            <person name="Brown S."/>
            <person name="Chillingworth T."/>
            <person name="Churcher C.M."/>
            <person name="Collins M."/>
            <person name="Connor R."/>
            <person name="Cronin A."/>
            <person name="Davis P."/>
            <person name="Feltwell T."/>
            <person name="Fraser A."/>
            <person name="Gentles S."/>
            <person name="Goble A."/>
            <person name="Hamlin N."/>
            <person name="Harris D.E."/>
            <person name="Hidalgo J."/>
            <person name="Hodgson G."/>
            <person name="Holroyd S."/>
            <person name="Hornsby T."/>
            <person name="Howarth S."/>
            <person name="Huckle E.J."/>
            <person name="Hunt S."/>
            <person name="Jagels K."/>
            <person name="James K.D."/>
            <person name="Jones L."/>
            <person name="Jones M."/>
            <person name="Leather S."/>
            <person name="McDonald S."/>
            <person name="McLean J."/>
            <person name="Mooney P."/>
            <person name="Moule S."/>
            <person name="Mungall K.L."/>
            <person name="Murphy L.D."/>
            <person name="Niblett D."/>
            <person name="Odell C."/>
            <person name="Oliver K."/>
            <person name="O'Neil S."/>
            <person name="Pearson D."/>
            <person name="Quail M.A."/>
            <person name="Rabbinowitsch E."/>
            <person name="Rutherford K.M."/>
            <person name="Rutter S."/>
            <person name="Saunders D."/>
            <person name="Seeger K."/>
            <person name="Sharp S."/>
            <person name="Skelton J."/>
            <person name="Simmonds M.N."/>
            <person name="Squares R."/>
            <person name="Squares S."/>
            <person name="Stevens K."/>
            <person name="Taylor K."/>
            <person name="Taylor R.G."/>
            <person name="Tivey A."/>
            <person name="Walsh S.V."/>
            <person name="Warren T."/>
            <person name="Whitehead S."/>
            <person name="Woodward J.R."/>
            <person name="Volckaert G."/>
            <person name="Aert R."/>
            <person name="Robben J."/>
            <person name="Grymonprez B."/>
            <person name="Weltjens I."/>
            <person name="Vanstreels E."/>
            <person name="Rieger M."/>
            <person name="Schaefer M."/>
            <person name="Mueller-Auer S."/>
            <person name="Gabel C."/>
            <person name="Fuchs M."/>
            <person name="Duesterhoeft A."/>
            <person name="Fritzc C."/>
            <person name="Holzer E."/>
            <person name="Moestl D."/>
            <person name="Hilbert H."/>
            <person name="Borzym K."/>
            <person name="Langer I."/>
            <person name="Beck A."/>
            <person name="Lehrach H."/>
            <person name="Reinhardt R."/>
            <person name="Pohl T.M."/>
            <person name="Eger P."/>
            <person name="Zimmermann W."/>
            <person name="Wedler H."/>
            <person name="Wambutt R."/>
            <person name="Purnelle B."/>
            <person name="Goffeau A."/>
            <person name="Cadieu E."/>
            <person name="Dreano S."/>
            <person name="Gloux S."/>
            <person name="Lelaure V."/>
            <person name="Mottier S."/>
            <person name="Galibert F."/>
            <person name="Aves S.J."/>
            <person name="Xiang Z."/>
            <person name="Hunt C."/>
            <person name="Moore K."/>
            <person name="Hurst S.M."/>
            <person name="Lucas M."/>
            <person name="Rochet M."/>
            <person name="Gaillardin C."/>
            <person name="Tallada V.A."/>
            <person name="Garzon A."/>
            <person name="Thode G."/>
            <person name="Daga R.R."/>
            <person name="Cruzado L."/>
            <person name="Jimenez J."/>
            <person name="Sanchez M."/>
            <person name="del Rey F."/>
            <person name="Benito J."/>
            <person name="Dominguez A."/>
            <person name="Revuelta J.L."/>
            <person name="Moreno S."/>
            <person name="Armstrong J."/>
            <person name="Forsburg S.L."/>
            <person name="Cerutti L."/>
            <person name="Lowe T."/>
            <person name="McCombie W.R."/>
            <person name="Paulsen I."/>
            <person name="Potashkin J."/>
            <person name="Shpakovski G.V."/>
            <person name="Ussery D."/>
            <person name="Barrell B.G."/>
            <person name="Nurse P."/>
        </authorList>
    </citation>
    <scope>NUCLEOTIDE SEQUENCE [LARGE SCALE GENOMIC DNA]</scope>
    <source>
        <strain>972 / ATCC 24843</strain>
    </source>
</reference>
<gene>
    <name type="ORF">SPAP32A8.03c</name>
</gene>
<name>YKW3_SCHPO</name>
<keyword id="KW-0479">Metal-binding</keyword>
<keyword id="KW-1185">Reference proteome</keyword>
<keyword id="KW-0862">Zinc</keyword>
<keyword id="KW-0863">Zinc-finger</keyword>
<sequence>MESQPVIWYCHSCSNEFQRPGNCPRCNSDFVEMVEPNTAPEDDPRAANFVNATEFNDPNAMLQNILQSLGQGVVPNVNPTDANRTANPNTNSNPNPNATNAQPNPTMFSTGQFSTEQGLPNVFFGAAAAQPGSGTPFVMPGIVNAAQIRNFFQNIMGGNAPQPEANSEQARNANTETSNPPFASAQTQGQEHRPSSPNPAEHMTGAYVNTPLNQPPSYAASTQPEFQQTTSPIFSSSSTPPPPPPRPSQPTSGESQNTNPRFPFSAQSFVFSVGPNGALHQVNTSTENPQNAQAGAIPITDLGSILERIFGSLNQPGAQQGEGEPFNPANMFSNIFNLSGNPGDYAWGARGLDDIISQLMEQAQGHNAPAPAPEDVIAKMKVQKPPKELIDEEGECTICMEMFKINDDVIQLPCKHYFHENCIKPWLRVNGTCAICRAPVDPNSQQRNNTSTDSANGHNPSNHANPSTSTTNDQGATLRNESFNAASQSNLSSEHGHSSRTPMDDFVDEEPLE</sequence>
<accession>Q9C1X4</accession>
<dbReference type="EMBL" id="CU329670">
    <property type="protein sequence ID" value="CAC29482.1"/>
    <property type="molecule type" value="Genomic_DNA"/>
</dbReference>
<dbReference type="SMR" id="Q9C1X4"/>
<dbReference type="BioGRID" id="278549">
    <property type="interactions" value="23"/>
</dbReference>
<dbReference type="FunCoup" id="Q9C1X4">
    <property type="interactions" value="417"/>
</dbReference>
<dbReference type="STRING" id="284812.Q9C1X4"/>
<dbReference type="iPTMnet" id="Q9C1X4"/>
<dbReference type="PaxDb" id="4896-SPAP32A8.03c.1"/>
<dbReference type="EnsemblFungi" id="SPAP32A8.03c.1">
    <property type="protein sequence ID" value="SPAP32A8.03c.1:pep"/>
    <property type="gene ID" value="SPAP32A8.03c"/>
</dbReference>
<dbReference type="KEGG" id="spo:2542072"/>
<dbReference type="PomBase" id="SPAP32A8.03c"/>
<dbReference type="VEuPathDB" id="FungiDB:SPAP32A8.03c"/>
<dbReference type="eggNOG" id="KOG0800">
    <property type="taxonomic scope" value="Eukaryota"/>
</dbReference>
<dbReference type="HOGENOM" id="CLU_554503_0_0_1"/>
<dbReference type="InParanoid" id="Q9C1X4"/>
<dbReference type="OMA" id="FDIRFIF"/>
<dbReference type="PRO" id="PR:Q9C1X4"/>
<dbReference type="Proteomes" id="UP000002485">
    <property type="component" value="Chromosome I"/>
</dbReference>
<dbReference type="GO" id="GO:0005737">
    <property type="term" value="C:cytoplasm"/>
    <property type="evidence" value="ECO:0000318"/>
    <property type="project" value="GO_Central"/>
</dbReference>
<dbReference type="GO" id="GO:0005634">
    <property type="term" value="C:nucleus"/>
    <property type="evidence" value="ECO:0000250"/>
    <property type="project" value="PomBase"/>
</dbReference>
<dbReference type="GO" id="GO:0061630">
    <property type="term" value="F:ubiquitin protein ligase activity"/>
    <property type="evidence" value="ECO:0000318"/>
    <property type="project" value="GO_Central"/>
</dbReference>
<dbReference type="GO" id="GO:0008270">
    <property type="term" value="F:zinc ion binding"/>
    <property type="evidence" value="ECO:0000255"/>
    <property type="project" value="PomBase"/>
</dbReference>
<dbReference type="GO" id="GO:0043161">
    <property type="term" value="P:proteasome-mediated ubiquitin-dependent protein catabolic process"/>
    <property type="evidence" value="ECO:0000266"/>
    <property type="project" value="PomBase"/>
</dbReference>
<dbReference type="GO" id="GO:0006511">
    <property type="term" value="P:ubiquitin-dependent protein catabolic process"/>
    <property type="evidence" value="ECO:0000318"/>
    <property type="project" value="GO_Central"/>
</dbReference>
<dbReference type="CDD" id="cd16667">
    <property type="entry name" value="RING-H2_RNF126-like"/>
    <property type="match status" value="1"/>
</dbReference>
<dbReference type="FunFam" id="3.30.40.10:FF:001257">
    <property type="entry name" value="Uncharacterized RING finger protein P32A8.03c"/>
    <property type="match status" value="1"/>
</dbReference>
<dbReference type="Gene3D" id="3.30.40.10">
    <property type="entry name" value="Zinc/RING finger domain, C3HC4 (zinc finger)"/>
    <property type="match status" value="1"/>
</dbReference>
<dbReference type="InterPro" id="IPR051834">
    <property type="entry name" value="RING_finger_E3_ligase"/>
</dbReference>
<dbReference type="InterPro" id="IPR001841">
    <property type="entry name" value="Znf_RING"/>
</dbReference>
<dbReference type="InterPro" id="IPR011016">
    <property type="entry name" value="Znf_RING-CH"/>
</dbReference>
<dbReference type="InterPro" id="IPR013083">
    <property type="entry name" value="Znf_RING/FYVE/PHD"/>
</dbReference>
<dbReference type="PANTHER" id="PTHR45931:SF3">
    <property type="entry name" value="RING ZINC FINGER-CONTAINING PROTEIN"/>
    <property type="match status" value="1"/>
</dbReference>
<dbReference type="PANTHER" id="PTHR45931">
    <property type="entry name" value="SI:CH211-59O9.10"/>
    <property type="match status" value="1"/>
</dbReference>
<dbReference type="Pfam" id="PF13639">
    <property type="entry name" value="zf-RING_2"/>
    <property type="match status" value="1"/>
</dbReference>
<dbReference type="SMART" id="SM00184">
    <property type="entry name" value="RING"/>
    <property type="match status" value="1"/>
</dbReference>
<dbReference type="SMART" id="SM00744">
    <property type="entry name" value="RINGv"/>
    <property type="match status" value="1"/>
</dbReference>
<dbReference type="SUPFAM" id="SSF57850">
    <property type="entry name" value="RING/U-box"/>
    <property type="match status" value="1"/>
</dbReference>
<dbReference type="PROSITE" id="PS50089">
    <property type="entry name" value="ZF_RING_2"/>
    <property type="match status" value="1"/>
</dbReference>
<protein>
    <recommendedName>
        <fullName>Uncharacterized RING finger protein P32A8.03c</fullName>
    </recommendedName>
</protein>